<evidence type="ECO:0000255" key="1">
    <source>
        <dbReference type="PROSITE-ProRule" id="PRU00238"/>
    </source>
</evidence>
<dbReference type="PIR" id="A02321">
    <property type="entry name" value="HACQ"/>
</dbReference>
<dbReference type="SMR" id="P02000"/>
<dbReference type="GO" id="GO:0072562">
    <property type="term" value="C:blood microparticle"/>
    <property type="evidence" value="ECO:0007669"/>
    <property type="project" value="TreeGrafter"/>
</dbReference>
<dbReference type="GO" id="GO:0031838">
    <property type="term" value="C:haptoglobin-hemoglobin complex"/>
    <property type="evidence" value="ECO:0007669"/>
    <property type="project" value="TreeGrafter"/>
</dbReference>
<dbReference type="GO" id="GO:0005833">
    <property type="term" value="C:hemoglobin complex"/>
    <property type="evidence" value="ECO:0007669"/>
    <property type="project" value="InterPro"/>
</dbReference>
<dbReference type="GO" id="GO:0031720">
    <property type="term" value="F:haptoglobin binding"/>
    <property type="evidence" value="ECO:0007669"/>
    <property type="project" value="TreeGrafter"/>
</dbReference>
<dbReference type="GO" id="GO:0020037">
    <property type="term" value="F:heme binding"/>
    <property type="evidence" value="ECO:0007669"/>
    <property type="project" value="InterPro"/>
</dbReference>
<dbReference type="GO" id="GO:0005506">
    <property type="term" value="F:iron ion binding"/>
    <property type="evidence" value="ECO:0007669"/>
    <property type="project" value="InterPro"/>
</dbReference>
<dbReference type="GO" id="GO:0043177">
    <property type="term" value="F:organic acid binding"/>
    <property type="evidence" value="ECO:0007669"/>
    <property type="project" value="TreeGrafter"/>
</dbReference>
<dbReference type="GO" id="GO:0019825">
    <property type="term" value="F:oxygen binding"/>
    <property type="evidence" value="ECO:0007669"/>
    <property type="project" value="InterPro"/>
</dbReference>
<dbReference type="GO" id="GO:0005344">
    <property type="term" value="F:oxygen carrier activity"/>
    <property type="evidence" value="ECO:0007669"/>
    <property type="project" value="UniProtKB-KW"/>
</dbReference>
<dbReference type="GO" id="GO:0004601">
    <property type="term" value="F:peroxidase activity"/>
    <property type="evidence" value="ECO:0007669"/>
    <property type="project" value="TreeGrafter"/>
</dbReference>
<dbReference type="GO" id="GO:0042744">
    <property type="term" value="P:hydrogen peroxide catabolic process"/>
    <property type="evidence" value="ECO:0007669"/>
    <property type="project" value="TreeGrafter"/>
</dbReference>
<dbReference type="CDD" id="cd08927">
    <property type="entry name" value="Hb-alpha-like"/>
    <property type="match status" value="1"/>
</dbReference>
<dbReference type="FunFam" id="1.10.490.10:FF:000002">
    <property type="entry name" value="Hemoglobin subunit alpha"/>
    <property type="match status" value="1"/>
</dbReference>
<dbReference type="Gene3D" id="1.10.490.10">
    <property type="entry name" value="Globins"/>
    <property type="match status" value="1"/>
</dbReference>
<dbReference type="InterPro" id="IPR000971">
    <property type="entry name" value="Globin"/>
</dbReference>
<dbReference type="InterPro" id="IPR009050">
    <property type="entry name" value="Globin-like_sf"/>
</dbReference>
<dbReference type="InterPro" id="IPR012292">
    <property type="entry name" value="Globin/Proto"/>
</dbReference>
<dbReference type="InterPro" id="IPR002338">
    <property type="entry name" value="Hemoglobin_a-typ"/>
</dbReference>
<dbReference type="InterPro" id="IPR050056">
    <property type="entry name" value="Hemoglobin_oxygen_transport"/>
</dbReference>
<dbReference type="InterPro" id="IPR002339">
    <property type="entry name" value="Hemoglobin_pi"/>
</dbReference>
<dbReference type="PANTHER" id="PTHR11442">
    <property type="entry name" value="HEMOGLOBIN FAMILY MEMBER"/>
    <property type="match status" value="1"/>
</dbReference>
<dbReference type="PANTHER" id="PTHR11442:SF48">
    <property type="entry name" value="HEMOGLOBIN SUBUNIT ALPHA"/>
    <property type="match status" value="1"/>
</dbReference>
<dbReference type="Pfam" id="PF00042">
    <property type="entry name" value="Globin"/>
    <property type="match status" value="1"/>
</dbReference>
<dbReference type="PRINTS" id="PR00612">
    <property type="entry name" value="ALPHAHAEM"/>
</dbReference>
<dbReference type="PRINTS" id="PR00815">
    <property type="entry name" value="PIHAEM"/>
</dbReference>
<dbReference type="SUPFAM" id="SSF46458">
    <property type="entry name" value="Globin-like"/>
    <property type="match status" value="1"/>
</dbReference>
<dbReference type="PROSITE" id="PS01033">
    <property type="entry name" value="GLOBIN"/>
    <property type="match status" value="1"/>
</dbReference>
<gene>
    <name type="primary">HBA</name>
</gene>
<sequence length="141" mass="15767">VLSEEDKSHVKAIWGKVAGHLEEYGAEALERMFCAYPQTKIYFPHFDMSHNSAQIRGHGKKVFAALHDAVNHIDDLAGALCRLSDLHAHNLRVDPVNFKFLSQCILVVFGVHHPCSLTPEVHASLDKFLCAVSAMLTSKYR</sequence>
<keyword id="KW-0903">Direct protein sequencing</keyword>
<keyword id="KW-0349">Heme</keyword>
<keyword id="KW-0408">Iron</keyword>
<keyword id="KW-0479">Metal-binding</keyword>
<keyword id="KW-0561">Oxygen transport</keyword>
<keyword id="KW-0813">Transport</keyword>
<feature type="chain" id="PRO_0000052575" description="Hemoglobin subunit alpha">
    <location>
        <begin position="1"/>
        <end position="141"/>
    </location>
</feature>
<feature type="domain" description="Globin" evidence="1">
    <location>
        <begin position="1"/>
        <end position="141"/>
    </location>
</feature>
<feature type="binding site" evidence="1">
    <location>
        <position position="58"/>
    </location>
    <ligand>
        <name>O2</name>
        <dbReference type="ChEBI" id="CHEBI:15379"/>
    </ligand>
</feature>
<feature type="binding site" description="proximal binding residue" evidence="1">
    <location>
        <position position="87"/>
    </location>
    <ligand>
        <name>heme b</name>
        <dbReference type="ChEBI" id="CHEBI:60344"/>
    </ligand>
    <ligandPart>
        <name>Fe</name>
        <dbReference type="ChEBI" id="CHEBI:18248"/>
    </ligandPart>
</feature>
<name>HBA_CAICR</name>
<comment type="function">
    <text>Involved in oxygen transport from the lung to the various peripheral tissues.</text>
</comment>
<comment type="subunit">
    <text>Heterotetramer of two alpha chains and two beta chains.</text>
</comment>
<comment type="tissue specificity">
    <text>Red blood cells.</text>
</comment>
<comment type="similarity">
    <text evidence="1">Belongs to the globin family.</text>
</comment>
<accession>P02000</accession>
<proteinExistence type="evidence at protein level"/>
<protein>
    <recommendedName>
        <fullName>Hemoglobin subunit alpha</fullName>
    </recommendedName>
    <alternativeName>
        <fullName>Alpha-globin</fullName>
    </alternativeName>
    <alternativeName>
        <fullName>Hemoglobin alpha chain</fullName>
    </alternativeName>
</protein>
<reference key="1">
    <citation type="journal article" date="1981" name="Hoppe-Seyler's Z. Physiol. Chem.">
        <title>Direct reciprocal allosteric interaction of oxygen and hydrogen carbonate sequence of the haemoglobins of the Caiman (Caiman crocodylus), the Nile crocodile (Crocodylus niloticus) and the Mississippi crocodile (Alligator mississippiensis).</title>
        <authorList>
            <person name="Leclercq F."/>
            <person name="Schnek A.G."/>
            <person name="Braunitzer G."/>
            <person name="Stangl A."/>
            <person name="Schrank B."/>
        </authorList>
    </citation>
    <scope>PROTEIN SEQUENCE</scope>
</reference>
<organism>
    <name type="scientific">Caiman crocodilus</name>
    <name type="common">Spectacled caiman</name>
    <name type="synonym">Caiman sclerops</name>
    <dbReference type="NCBI Taxonomy" id="8499"/>
    <lineage>
        <taxon>Eukaryota</taxon>
        <taxon>Metazoa</taxon>
        <taxon>Chordata</taxon>
        <taxon>Craniata</taxon>
        <taxon>Vertebrata</taxon>
        <taxon>Euteleostomi</taxon>
        <taxon>Archelosauria</taxon>
        <taxon>Archosauria</taxon>
        <taxon>Crocodylia</taxon>
        <taxon>Alligatoridae</taxon>
        <taxon>Caimaninae</taxon>
        <taxon>Caiman</taxon>
    </lineage>
</organism>